<feature type="chain" id="PRO_1000050393" description="Cytochrome b6-f complex subunit 5">
    <location>
        <begin position="1"/>
        <end position="39"/>
    </location>
</feature>
<feature type="transmembrane region" description="Helical" evidence="1">
    <location>
        <begin position="5"/>
        <end position="25"/>
    </location>
</feature>
<comment type="function">
    <text evidence="1">Component of the cytochrome b6-f complex, which mediates electron transfer between photosystem II (PSII) and photosystem I (PSI), cyclic electron flow around PSI, and state transitions. PetG is required for either the stability or assembly of the cytochrome b6-f complex.</text>
</comment>
<comment type="subunit">
    <text evidence="1">The 4 large subunits of the cytochrome b6-f complex are cytochrome b6, subunit IV (17 kDa polypeptide, PetD), cytochrome f and the Rieske protein, while the 4 small subunits are PetG, PetL, PetM and PetN. The complex functions as a dimer.</text>
</comment>
<comment type="subcellular location">
    <subcellularLocation>
        <location evidence="1">Cellular thylakoid membrane</location>
        <topology evidence="1">Single-pass membrane protein</topology>
    </subcellularLocation>
</comment>
<comment type="similarity">
    <text evidence="1">Belongs to the PetG family.</text>
</comment>
<keyword id="KW-0249">Electron transport</keyword>
<keyword id="KW-0472">Membrane</keyword>
<keyword id="KW-0602">Photosynthesis</keyword>
<keyword id="KW-0793">Thylakoid</keyword>
<keyword id="KW-0812">Transmembrane</keyword>
<keyword id="KW-1133">Transmembrane helix</keyword>
<keyword id="KW-0813">Transport</keyword>
<name>PETG_PROM5</name>
<reference key="1">
    <citation type="journal article" date="2007" name="PLoS Genet.">
        <title>Patterns and implications of gene gain and loss in the evolution of Prochlorococcus.</title>
        <authorList>
            <person name="Kettler G.C."/>
            <person name="Martiny A.C."/>
            <person name="Huang K."/>
            <person name="Zucker J."/>
            <person name="Coleman M.L."/>
            <person name="Rodrigue S."/>
            <person name="Chen F."/>
            <person name="Lapidus A."/>
            <person name="Ferriera S."/>
            <person name="Johnson J."/>
            <person name="Steglich C."/>
            <person name="Church G.M."/>
            <person name="Richardson P."/>
            <person name="Chisholm S.W."/>
        </authorList>
    </citation>
    <scope>NUCLEOTIDE SEQUENCE [LARGE SCALE GENOMIC DNA]</scope>
    <source>
        <strain>MIT 9515</strain>
    </source>
</reference>
<accession>A2BX44</accession>
<gene>
    <name evidence="1" type="primary">petG</name>
    <name type="ordered locus">P9515_11481</name>
</gene>
<dbReference type="EMBL" id="CP000552">
    <property type="protein sequence ID" value="ABM72355.1"/>
    <property type="molecule type" value="Genomic_DNA"/>
</dbReference>
<dbReference type="RefSeq" id="WP_011820455.1">
    <property type="nucleotide sequence ID" value="NC_008817.1"/>
</dbReference>
<dbReference type="SMR" id="A2BX44"/>
<dbReference type="STRING" id="167542.P9515_11481"/>
<dbReference type="GeneID" id="60200780"/>
<dbReference type="KEGG" id="pmc:P9515_11481"/>
<dbReference type="HOGENOM" id="CLU_216962_0_0_3"/>
<dbReference type="OrthoDB" id="428448at2"/>
<dbReference type="Proteomes" id="UP000001589">
    <property type="component" value="Chromosome"/>
</dbReference>
<dbReference type="GO" id="GO:0009512">
    <property type="term" value="C:cytochrome b6f complex"/>
    <property type="evidence" value="ECO:0007669"/>
    <property type="project" value="InterPro"/>
</dbReference>
<dbReference type="GO" id="GO:0031676">
    <property type="term" value="C:plasma membrane-derived thylakoid membrane"/>
    <property type="evidence" value="ECO:0007669"/>
    <property type="project" value="UniProtKB-SubCell"/>
</dbReference>
<dbReference type="GO" id="GO:0045158">
    <property type="term" value="F:electron transporter, transferring electrons within cytochrome b6/f complex of photosystem II activity"/>
    <property type="evidence" value="ECO:0007669"/>
    <property type="project" value="UniProtKB-UniRule"/>
</dbReference>
<dbReference type="GO" id="GO:0017004">
    <property type="term" value="P:cytochrome complex assembly"/>
    <property type="evidence" value="ECO:0007669"/>
    <property type="project" value="UniProtKB-UniRule"/>
</dbReference>
<dbReference type="GO" id="GO:0015979">
    <property type="term" value="P:photosynthesis"/>
    <property type="evidence" value="ECO:0007669"/>
    <property type="project" value="UniProtKB-KW"/>
</dbReference>
<dbReference type="HAMAP" id="MF_00432">
    <property type="entry name" value="Cytb6_f_PetG"/>
    <property type="match status" value="1"/>
</dbReference>
<dbReference type="InterPro" id="IPR003683">
    <property type="entry name" value="Cyt_6/f_cplx_su5"/>
</dbReference>
<dbReference type="InterPro" id="IPR036099">
    <property type="entry name" value="Cyt_6/f_cplx_su5_sf"/>
</dbReference>
<dbReference type="NCBIfam" id="NF001907">
    <property type="entry name" value="PRK00665.1"/>
    <property type="match status" value="1"/>
</dbReference>
<dbReference type="Pfam" id="PF02529">
    <property type="entry name" value="PetG"/>
    <property type="match status" value="1"/>
</dbReference>
<dbReference type="PIRSF" id="PIRSF000034">
    <property type="entry name" value="Cyt_b6-f_V"/>
    <property type="match status" value="1"/>
</dbReference>
<dbReference type="SUPFAM" id="SSF103446">
    <property type="entry name" value="PetG subunit of the cytochrome b6f complex"/>
    <property type="match status" value="1"/>
</dbReference>
<sequence length="39" mass="4275">MIEPLLCGIVLGLVPITLLGLFVSAWNQYRRGSGLLDMD</sequence>
<organism>
    <name type="scientific">Prochlorococcus marinus (strain MIT 9515)</name>
    <dbReference type="NCBI Taxonomy" id="167542"/>
    <lineage>
        <taxon>Bacteria</taxon>
        <taxon>Bacillati</taxon>
        <taxon>Cyanobacteriota</taxon>
        <taxon>Cyanophyceae</taxon>
        <taxon>Synechococcales</taxon>
        <taxon>Prochlorococcaceae</taxon>
        <taxon>Prochlorococcus</taxon>
    </lineage>
</organism>
<evidence type="ECO:0000255" key="1">
    <source>
        <dbReference type="HAMAP-Rule" id="MF_00432"/>
    </source>
</evidence>
<protein>
    <recommendedName>
        <fullName evidence="1">Cytochrome b6-f complex subunit 5</fullName>
    </recommendedName>
    <alternativeName>
        <fullName evidence="1">Cytochrome b6-f complex subunit PetG</fullName>
    </alternativeName>
    <alternativeName>
        <fullName evidence="1">Cytochrome b6-f complex subunit V</fullName>
    </alternativeName>
</protein>
<proteinExistence type="inferred from homology"/>